<reference key="1">
    <citation type="journal article" date="2003" name="Lancet">
        <title>Genome sequence of Vibrio parahaemolyticus: a pathogenic mechanism distinct from that of V. cholerae.</title>
        <authorList>
            <person name="Makino K."/>
            <person name="Oshima K."/>
            <person name="Kurokawa K."/>
            <person name="Yokoyama K."/>
            <person name="Uda T."/>
            <person name="Tagomori K."/>
            <person name="Iijima Y."/>
            <person name="Najima M."/>
            <person name="Nakano M."/>
            <person name="Yamashita A."/>
            <person name="Kubota Y."/>
            <person name="Kimura S."/>
            <person name="Yasunaga T."/>
            <person name="Honda T."/>
            <person name="Shinagawa H."/>
            <person name="Hattori M."/>
            <person name="Iida T."/>
        </authorList>
    </citation>
    <scope>NUCLEOTIDE SEQUENCE [LARGE SCALE GENOMIC DNA]</scope>
    <source>
        <strain>RIMD 2210633</strain>
    </source>
</reference>
<protein>
    <recommendedName>
        <fullName evidence="1">Zinc import ATP-binding protein ZnuC</fullName>
        <ecNumber evidence="1">7.2.2.20</ecNumber>
    </recommendedName>
</protein>
<gene>
    <name evidence="1" type="primary">znuC</name>
    <name type="ordered locus">VP0852</name>
</gene>
<dbReference type="EC" id="7.2.2.20" evidence="1"/>
<dbReference type="EMBL" id="BA000031">
    <property type="protein sequence ID" value="BAC59115.1"/>
    <property type="molecule type" value="Genomic_DNA"/>
</dbReference>
<dbReference type="RefSeq" id="NP_797231.1">
    <property type="nucleotide sequence ID" value="NC_004603.1"/>
</dbReference>
<dbReference type="RefSeq" id="WP_005455461.1">
    <property type="nucleotide sequence ID" value="NC_004603.1"/>
</dbReference>
<dbReference type="SMR" id="Q87RE5"/>
<dbReference type="GeneID" id="1188349"/>
<dbReference type="KEGG" id="vpa:VP0852"/>
<dbReference type="PATRIC" id="fig|223926.6.peg.808"/>
<dbReference type="eggNOG" id="COG1121">
    <property type="taxonomic scope" value="Bacteria"/>
</dbReference>
<dbReference type="HOGENOM" id="CLU_000604_1_11_6"/>
<dbReference type="Proteomes" id="UP000002493">
    <property type="component" value="Chromosome 1"/>
</dbReference>
<dbReference type="GO" id="GO:0005886">
    <property type="term" value="C:plasma membrane"/>
    <property type="evidence" value="ECO:0007669"/>
    <property type="project" value="UniProtKB-SubCell"/>
</dbReference>
<dbReference type="GO" id="GO:0015633">
    <property type="term" value="F:ABC-type zinc transporter activity"/>
    <property type="evidence" value="ECO:0007669"/>
    <property type="project" value="UniProtKB-EC"/>
</dbReference>
<dbReference type="GO" id="GO:0005524">
    <property type="term" value="F:ATP binding"/>
    <property type="evidence" value="ECO:0007669"/>
    <property type="project" value="UniProtKB-KW"/>
</dbReference>
<dbReference type="GO" id="GO:0016887">
    <property type="term" value="F:ATP hydrolysis activity"/>
    <property type="evidence" value="ECO:0007669"/>
    <property type="project" value="InterPro"/>
</dbReference>
<dbReference type="GO" id="GO:0010043">
    <property type="term" value="P:response to zinc ion"/>
    <property type="evidence" value="ECO:0007669"/>
    <property type="project" value="TreeGrafter"/>
</dbReference>
<dbReference type="FunFam" id="3.40.50.300:FF:000392">
    <property type="entry name" value="Zinc import ATP-binding protein ZnuC"/>
    <property type="match status" value="1"/>
</dbReference>
<dbReference type="Gene3D" id="3.40.50.300">
    <property type="entry name" value="P-loop containing nucleotide triphosphate hydrolases"/>
    <property type="match status" value="1"/>
</dbReference>
<dbReference type="InterPro" id="IPR003593">
    <property type="entry name" value="AAA+_ATPase"/>
</dbReference>
<dbReference type="InterPro" id="IPR003439">
    <property type="entry name" value="ABC_transporter-like_ATP-bd"/>
</dbReference>
<dbReference type="InterPro" id="IPR050153">
    <property type="entry name" value="Metal_Ion_Import_ABC"/>
</dbReference>
<dbReference type="InterPro" id="IPR027417">
    <property type="entry name" value="P-loop_NTPase"/>
</dbReference>
<dbReference type="NCBIfam" id="NF007090">
    <property type="entry name" value="PRK09544.1"/>
    <property type="match status" value="1"/>
</dbReference>
<dbReference type="PANTHER" id="PTHR42734">
    <property type="entry name" value="METAL TRANSPORT SYSTEM ATP-BINDING PROTEIN TM_0124-RELATED"/>
    <property type="match status" value="1"/>
</dbReference>
<dbReference type="PANTHER" id="PTHR42734:SF9">
    <property type="entry name" value="ZINC IMPORT ATP-BINDING PROTEIN ZNUC"/>
    <property type="match status" value="1"/>
</dbReference>
<dbReference type="Pfam" id="PF00005">
    <property type="entry name" value="ABC_tran"/>
    <property type="match status" value="1"/>
</dbReference>
<dbReference type="SMART" id="SM00382">
    <property type="entry name" value="AAA"/>
    <property type="match status" value="1"/>
</dbReference>
<dbReference type="SUPFAM" id="SSF52540">
    <property type="entry name" value="P-loop containing nucleoside triphosphate hydrolases"/>
    <property type="match status" value="1"/>
</dbReference>
<dbReference type="PROSITE" id="PS50893">
    <property type="entry name" value="ABC_TRANSPORTER_2"/>
    <property type="match status" value="1"/>
</dbReference>
<dbReference type="PROSITE" id="PS51298">
    <property type="entry name" value="ZNUC"/>
    <property type="match status" value="1"/>
</dbReference>
<comment type="function">
    <text evidence="1">Part of the ABC transporter complex ZnuABC involved in zinc import. Responsible for energy coupling to the transport system.</text>
</comment>
<comment type="catalytic activity">
    <reaction evidence="1">
        <text>Zn(2+)(out) + ATP(in) + H2O(in) = Zn(2+)(in) + ADP(in) + phosphate(in) + H(+)(in)</text>
        <dbReference type="Rhea" id="RHEA:29795"/>
        <dbReference type="ChEBI" id="CHEBI:15377"/>
        <dbReference type="ChEBI" id="CHEBI:15378"/>
        <dbReference type="ChEBI" id="CHEBI:29105"/>
        <dbReference type="ChEBI" id="CHEBI:30616"/>
        <dbReference type="ChEBI" id="CHEBI:43474"/>
        <dbReference type="ChEBI" id="CHEBI:456216"/>
        <dbReference type="EC" id="7.2.2.20"/>
    </reaction>
</comment>
<comment type="subunit">
    <text evidence="1">The complex is composed of two ATP-binding proteins (ZnuC), two transmembrane proteins (ZnuB) and a solute-binding protein (ZnuA).</text>
</comment>
<comment type="subcellular location">
    <subcellularLocation>
        <location evidence="1">Cell inner membrane</location>
        <topology evidence="1">Peripheral membrane protein</topology>
    </subcellularLocation>
</comment>
<comment type="similarity">
    <text evidence="1">Belongs to the ABC transporter superfamily. Zinc importer (TC 3.A.1.15.5) family.</text>
</comment>
<feature type="chain" id="PRO_0000281562" description="Zinc import ATP-binding protein ZnuC">
    <location>
        <begin position="1"/>
        <end position="262"/>
    </location>
</feature>
<feature type="domain" description="ABC transporter" evidence="1">
    <location>
        <begin position="5"/>
        <end position="220"/>
    </location>
</feature>
<feature type="region of interest" description="Disordered" evidence="2">
    <location>
        <begin position="236"/>
        <end position="262"/>
    </location>
</feature>
<feature type="binding site" evidence="1">
    <location>
        <begin position="37"/>
        <end position="44"/>
    </location>
    <ligand>
        <name>ATP</name>
        <dbReference type="ChEBI" id="CHEBI:30616"/>
    </ligand>
</feature>
<sequence length="262" mass="29012">MSSLVSLEQLCVEFDDRRVLDNISMELEKGKITTLIGPNGAGKSTLVKVILGLQKPTSGKLVKAKKLKIGYVPQKLKLNDSLPLNVIRFLNLAGKYSKQECLDALRLVGAEHLIKSNMHRLSGGENQRVLLARALLQRPDLLVLDEPAQGVDVQGQIDLYDLIESIRHRFDCAVFMVSHDLHLVMAKTDDVICLHHHVCCSGSPATITQHPSYIALFGNAARESLAFYHHDHEHHHHDLSGSPVSGDATSCSNHNHGHHHHD</sequence>
<evidence type="ECO:0000255" key="1">
    <source>
        <dbReference type="HAMAP-Rule" id="MF_01725"/>
    </source>
</evidence>
<evidence type="ECO:0000256" key="2">
    <source>
        <dbReference type="SAM" id="MobiDB-lite"/>
    </source>
</evidence>
<accession>Q87RE5</accession>
<name>ZNUC_VIBPA</name>
<proteinExistence type="inferred from homology"/>
<organism>
    <name type="scientific">Vibrio parahaemolyticus serotype O3:K6 (strain RIMD 2210633)</name>
    <dbReference type="NCBI Taxonomy" id="223926"/>
    <lineage>
        <taxon>Bacteria</taxon>
        <taxon>Pseudomonadati</taxon>
        <taxon>Pseudomonadota</taxon>
        <taxon>Gammaproteobacteria</taxon>
        <taxon>Vibrionales</taxon>
        <taxon>Vibrionaceae</taxon>
        <taxon>Vibrio</taxon>
    </lineage>
</organism>
<keyword id="KW-0067">ATP-binding</keyword>
<keyword id="KW-0997">Cell inner membrane</keyword>
<keyword id="KW-1003">Cell membrane</keyword>
<keyword id="KW-0406">Ion transport</keyword>
<keyword id="KW-0472">Membrane</keyword>
<keyword id="KW-0547">Nucleotide-binding</keyword>
<keyword id="KW-1278">Translocase</keyword>
<keyword id="KW-0813">Transport</keyword>
<keyword id="KW-0862">Zinc</keyword>
<keyword id="KW-0864">Zinc transport</keyword>